<feature type="chain" id="PRO_0000402206" description="ASTRA-associated protein 1">
    <location>
        <begin position="1"/>
        <end position="445"/>
    </location>
</feature>
<feature type="repeat" description="WD 1">
    <location>
        <begin position="10"/>
        <end position="50"/>
    </location>
</feature>
<feature type="repeat" description="WD 2">
    <location>
        <begin position="53"/>
        <end position="107"/>
    </location>
</feature>
<feature type="repeat" description="WD 3">
    <location>
        <begin position="406"/>
        <end position="445"/>
    </location>
</feature>
<keyword id="KW-0156">Chromatin regulator</keyword>
<keyword id="KW-0539">Nucleus</keyword>
<keyword id="KW-0677">Repeat</keyword>
<keyword id="KW-0853">WD repeat</keyword>
<proteinExistence type="inferred from homology"/>
<accession>B9WJ47</accession>
<sequence>MLSKKFTLRSHKSSITYIYPHPTIPSNVFTADSSGLIINWDLTIRRPKSSWQAHTDTILTISTIENNNSNNNGDGDGDGDGDYYLLTHSRDNTIKIWDLLKFSCLLEIPCNSLNFTNIEIFNDLLFTPSSINSNNLDVYKINPKNWQIKRLIFDFDIYKLVNKNENENGNIIQEIGSDTITNNRNDFGIIMQMKIIKTITTTTTNTTTTTTKENQEENGGDFIIYLGFESGDIVGLQLILPPARILSTTNKSTNTNTNTNDKTIIYNQSAKFILKYHNSFHVPNPIICLSNLNSILISSSITNKLIIHYNPIIEIKNLKYSGIQSIVYFKKFHQLIFGYWNGYIQYDDILIKQNLPKLGTTNNNNINNNIDTDINQEQSKLTKKLTFMTILNESKQEISQTSTTTTTTSGGDKSKYSSLIKSKRNFKLPLLLVGYEDGSIVAYNI</sequence>
<reference key="1">
    <citation type="journal article" date="2009" name="Genome Res.">
        <title>Comparative genomics of the fungal pathogens Candida dubliniensis and Candida albicans.</title>
        <authorList>
            <person name="Jackson A.P."/>
            <person name="Gamble J.A."/>
            <person name="Yeomans T."/>
            <person name="Moran G.P."/>
            <person name="Saunders D."/>
            <person name="Harris D."/>
            <person name="Aslett M."/>
            <person name="Barrell J.F."/>
            <person name="Butler G."/>
            <person name="Citiulo F."/>
            <person name="Coleman D.C."/>
            <person name="de Groot P.W.J."/>
            <person name="Goodwin T.J."/>
            <person name="Quail M.A."/>
            <person name="McQuillan J."/>
            <person name="Munro C.A."/>
            <person name="Pain A."/>
            <person name="Poulter R.T."/>
            <person name="Rajandream M.A."/>
            <person name="Renauld H."/>
            <person name="Spiering M.J."/>
            <person name="Tivey A."/>
            <person name="Gow N.A.R."/>
            <person name="Barrell B."/>
            <person name="Sullivan D.J."/>
            <person name="Berriman M."/>
        </authorList>
    </citation>
    <scope>NUCLEOTIDE SEQUENCE [LARGE SCALE GENOMIC DNA]</scope>
    <source>
        <strain>CD36 / ATCC MYA-646 / CBS 7987 / NCPF 3949 / NRRL Y-17841</strain>
    </source>
</reference>
<dbReference type="EMBL" id="FM992693">
    <property type="protein sequence ID" value="CAX41268.1"/>
    <property type="molecule type" value="Genomic_DNA"/>
</dbReference>
<dbReference type="RefSeq" id="XP_002421109.1">
    <property type="nucleotide sequence ID" value="XM_002421064.1"/>
</dbReference>
<dbReference type="GeneID" id="8048890"/>
<dbReference type="KEGG" id="cdu:CD36_63960"/>
<dbReference type="CGD" id="CAL0000171311">
    <property type="gene designation" value="Cd36_63960"/>
</dbReference>
<dbReference type="VEuPathDB" id="FungiDB:CD36_63960"/>
<dbReference type="eggNOG" id="KOG0322">
    <property type="taxonomic scope" value="Eukaryota"/>
</dbReference>
<dbReference type="HOGENOM" id="CLU_045414_0_0_1"/>
<dbReference type="OrthoDB" id="7668193at2759"/>
<dbReference type="Proteomes" id="UP000002605">
    <property type="component" value="Chromosome 6"/>
</dbReference>
<dbReference type="GO" id="GO:0005634">
    <property type="term" value="C:nucleus"/>
    <property type="evidence" value="ECO:0007669"/>
    <property type="project" value="UniProtKB-SubCell"/>
</dbReference>
<dbReference type="GO" id="GO:0006325">
    <property type="term" value="P:chromatin organization"/>
    <property type="evidence" value="ECO:0007669"/>
    <property type="project" value="UniProtKB-KW"/>
</dbReference>
<dbReference type="Gene3D" id="2.130.10.10">
    <property type="entry name" value="YVTN repeat-like/Quinoprotein amine dehydrogenase"/>
    <property type="match status" value="1"/>
</dbReference>
<dbReference type="InterPro" id="IPR015943">
    <property type="entry name" value="WD40/YVTN_repeat-like_dom_sf"/>
</dbReference>
<dbReference type="InterPro" id="IPR036322">
    <property type="entry name" value="WD40_repeat_dom_sf"/>
</dbReference>
<dbReference type="InterPro" id="IPR001680">
    <property type="entry name" value="WD40_rpt"/>
</dbReference>
<dbReference type="SMART" id="SM00320">
    <property type="entry name" value="WD40"/>
    <property type="match status" value="2"/>
</dbReference>
<dbReference type="SUPFAM" id="SSF50978">
    <property type="entry name" value="WD40 repeat-like"/>
    <property type="match status" value="1"/>
</dbReference>
<dbReference type="PROSITE" id="PS50082">
    <property type="entry name" value="WD_REPEATS_2"/>
    <property type="match status" value="1"/>
</dbReference>
<dbReference type="PROSITE" id="PS50294">
    <property type="entry name" value="WD_REPEATS_REGION"/>
    <property type="match status" value="1"/>
</dbReference>
<name>ASA1_CANDC</name>
<comment type="function">
    <text evidence="1">Component of the ASTRA complex involved in chromatin remodeling.</text>
</comment>
<comment type="subunit">
    <text evidence="1">Component of the ASTRA chromatin remodeling machinery complex.</text>
</comment>
<comment type="subcellular location">
    <subcellularLocation>
        <location evidence="1">Nucleus</location>
    </subcellularLocation>
</comment>
<comment type="similarity">
    <text evidence="2">Belongs to the WD repeat ASA1 family.</text>
</comment>
<protein>
    <recommendedName>
        <fullName>ASTRA-associated protein 1</fullName>
    </recommendedName>
</protein>
<gene>
    <name type="primary">ASA1</name>
    <name type="ORF">CD36_63960</name>
</gene>
<organism>
    <name type="scientific">Candida dubliniensis (strain CD36 / ATCC MYA-646 / CBS 7987 / NCPF 3949 / NRRL Y-17841)</name>
    <name type="common">Yeast</name>
    <dbReference type="NCBI Taxonomy" id="573826"/>
    <lineage>
        <taxon>Eukaryota</taxon>
        <taxon>Fungi</taxon>
        <taxon>Dikarya</taxon>
        <taxon>Ascomycota</taxon>
        <taxon>Saccharomycotina</taxon>
        <taxon>Pichiomycetes</taxon>
        <taxon>Debaryomycetaceae</taxon>
        <taxon>Candida/Lodderomyces clade</taxon>
        <taxon>Candida</taxon>
    </lineage>
</organism>
<evidence type="ECO:0000250" key="1"/>
<evidence type="ECO:0000305" key="2"/>